<feature type="chain" id="PRO_0000396070" description="F-box/kelch-repeat protein At2g29830">
    <location>
        <begin position="1"/>
        <end position="383"/>
    </location>
</feature>
<feature type="domain" description="F-box" evidence="1">
    <location>
        <begin position="27"/>
        <end position="73"/>
    </location>
</feature>
<feature type="repeat" description="Kelch 1">
    <location>
        <begin position="130"/>
        <end position="178"/>
    </location>
</feature>
<feature type="repeat" description="Kelch 2">
    <location>
        <begin position="179"/>
        <end position="224"/>
    </location>
</feature>
<feature type="repeat" description="Kelch 3">
    <location>
        <begin position="226"/>
        <end position="272"/>
    </location>
</feature>
<feature type="repeat" description="Kelch 4">
    <location>
        <begin position="274"/>
        <end position="317"/>
    </location>
</feature>
<feature type="repeat" description="Kelch 5">
    <location>
        <begin position="324"/>
        <end position="370"/>
    </location>
</feature>
<feature type="region of interest" description="Disordered" evidence="2">
    <location>
        <begin position="1"/>
        <end position="21"/>
    </location>
</feature>
<feature type="compositionally biased region" description="Acidic residues" evidence="2">
    <location>
        <begin position="11"/>
        <end position="21"/>
    </location>
</feature>
<keyword id="KW-0880">Kelch repeat</keyword>
<keyword id="KW-1185">Reference proteome</keyword>
<keyword id="KW-0677">Repeat</keyword>
<sequence length="383" mass="43283">MVVLSEIPGDPNEDNQNENPQEEVENLPILLQLPEELIASIVALIPRCHYPSLSLVSRAFRHLITSQELYVARSNLGFTEPVLYALIGFQAYTRPSWFFLRRSNFPLQLHRIRSLPPMLSGAAVVTIDYKMYVMGGCIGYNHPASSNVIVIDCRFHTWKYLPDMKRARCRAATGIIDGRIYVIGGCKKQDADWVEVFDVTTQSWETVPSECPNDANENGEFITYVVMQGRLFILDLECCFSYEPVQGLWESWDDGSELMRFWHSSSSCVVGDLLYALDLTCALEHPIVVYYPNELVWRPVMGVDTAHLPILTEYTSTLANFDGKLVILGGGDCSESSSEIWCVEIALETRQGDQIWGVVKSVSIVSRDLPMRHVIELCRTVMV</sequence>
<accession>O82373</accession>
<name>FK128_ARATH</name>
<evidence type="ECO:0000255" key="1">
    <source>
        <dbReference type="PROSITE-ProRule" id="PRU00080"/>
    </source>
</evidence>
<evidence type="ECO:0000256" key="2">
    <source>
        <dbReference type="SAM" id="MobiDB-lite"/>
    </source>
</evidence>
<proteinExistence type="evidence at transcript level"/>
<protein>
    <recommendedName>
        <fullName>F-box/kelch-repeat protein At2g29830</fullName>
    </recommendedName>
</protein>
<reference key="1">
    <citation type="journal article" date="1999" name="Nature">
        <title>Sequence and analysis of chromosome 2 of the plant Arabidopsis thaliana.</title>
        <authorList>
            <person name="Lin X."/>
            <person name="Kaul S."/>
            <person name="Rounsley S.D."/>
            <person name="Shea T.P."/>
            <person name="Benito M.-I."/>
            <person name="Town C.D."/>
            <person name="Fujii C.Y."/>
            <person name="Mason T.M."/>
            <person name="Bowman C.L."/>
            <person name="Barnstead M.E."/>
            <person name="Feldblyum T.V."/>
            <person name="Buell C.R."/>
            <person name="Ketchum K.A."/>
            <person name="Lee J.J."/>
            <person name="Ronning C.M."/>
            <person name="Koo H.L."/>
            <person name="Moffat K.S."/>
            <person name="Cronin L.A."/>
            <person name="Shen M."/>
            <person name="Pai G."/>
            <person name="Van Aken S."/>
            <person name="Umayam L."/>
            <person name="Tallon L.J."/>
            <person name="Gill J.E."/>
            <person name="Adams M.D."/>
            <person name="Carrera A.J."/>
            <person name="Creasy T.H."/>
            <person name="Goodman H.M."/>
            <person name="Somerville C.R."/>
            <person name="Copenhaver G.P."/>
            <person name="Preuss D."/>
            <person name="Nierman W.C."/>
            <person name="White O."/>
            <person name="Eisen J.A."/>
            <person name="Salzberg S.L."/>
            <person name="Fraser C.M."/>
            <person name="Venter J.C."/>
        </authorList>
    </citation>
    <scope>NUCLEOTIDE SEQUENCE [LARGE SCALE GENOMIC DNA]</scope>
    <source>
        <strain>cv. Columbia</strain>
    </source>
</reference>
<reference key="2">
    <citation type="journal article" date="2017" name="Plant J.">
        <title>Araport11: a complete reannotation of the Arabidopsis thaliana reference genome.</title>
        <authorList>
            <person name="Cheng C.Y."/>
            <person name="Krishnakumar V."/>
            <person name="Chan A.P."/>
            <person name="Thibaud-Nissen F."/>
            <person name="Schobel S."/>
            <person name="Town C.D."/>
        </authorList>
    </citation>
    <scope>GENOME REANNOTATION</scope>
    <source>
        <strain>cv. Columbia</strain>
    </source>
</reference>
<reference key="3">
    <citation type="journal article" date="2005" name="Plant Physiol.">
        <title>Analysis of the cDNAs of hypothetical genes on Arabidopsis chromosome 2 reveals numerous transcript variants.</title>
        <authorList>
            <person name="Xiao Y.-L."/>
            <person name="Smith S.R."/>
            <person name="Ishmael N."/>
            <person name="Redman J.C."/>
            <person name="Kumar N."/>
            <person name="Monaghan E.L."/>
            <person name="Ayele M."/>
            <person name="Haas B.J."/>
            <person name="Wu H.C."/>
            <person name="Town C.D."/>
        </authorList>
    </citation>
    <scope>NUCLEOTIDE SEQUENCE [LARGE SCALE MRNA] OF 1-234</scope>
    <source>
        <strain>cv. Columbia</strain>
    </source>
</reference>
<gene>
    <name type="ordered locus">At2g29830</name>
    <name type="ORF">T27A16.1</name>
</gene>
<dbReference type="EMBL" id="AC005496">
    <property type="protein sequence ID" value="AAC35218.1"/>
    <property type="molecule type" value="Genomic_DNA"/>
</dbReference>
<dbReference type="EMBL" id="CP002685">
    <property type="protein sequence ID" value="AEC08309.1"/>
    <property type="molecule type" value="Genomic_DNA"/>
</dbReference>
<dbReference type="EMBL" id="AY464611">
    <property type="status" value="NOT_ANNOTATED_CDS"/>
    <property type="molecule type" value="mRNA"/>
</dbReference>
<dbReference type="PIR" id="B84701">
    <property type="entry name" value="B84701"/>
</dbReference>
<dbReference type="RefSeq" id="NP_180544.1">
    <property type="nucleotide sequence ID" value="NM_128537.2"/>
</dbReference>
<dbReference type="SMR" id="O82373"/>
<dbReference type="PaxDb" id="3702-AT2G29830.1"/>
<dbReference type="EnsemblPlants" id="AT2G29830.1">
    <property type="protein sequence ID" value="AT2G29830.1"/>
    <property type="gene ID" value="AT2G29830"/>
</dbReference>
<dbReference type="GeneID" id="817533"/>
<dbReference type="Gramene" id="AT2G29830.1">
    <property type="protein sequence ID" value="AT2G29830.1"/>
    <property type="gene ID" value="AT2G29830"/>
</dbReference>
<dbReference type="KEGG" id="ath:AT2G29830"/>
<dbReference type="Araport" id="AT2G29830"/>
<dbReference type="TAIR" id="AT2G29830"/>
<dbReference type="eggNOG" id="KOG1072">
    <property type="taxonomic scope" value="Eukaryota"/>
</dbReference>
<dbReference type="HOGENOM" id="CLU_032521_1_1_1"/>
<dbReference type="InParanoid" id="O82373"/>
<dbReference type="OMA" id="CEPKEGR"/>
<dbReference type="PhylomeDB" id="O82373"/>
<dbReference type="PRO" id="PR:O82373"/>
<dbReference type="Proteomes" id="UP000006548">
    <property type="component" value="Chromosome 2"/>
</dbReference>
<dbReference type="ExpressionAtlas" id="O82373">
    <property type="expression patterns" value="baseline and differential"/>
</dbReference>
<dbReference type="CDD" id="cd22152">
    <property type="entry name" value="F-box_AtAFR-like"/>
    <property type="match status" value="1"/>
</dbReference>
<dbReference type="Gene3D" id="2.120.10.80">
    <property type="entry name" value="Kelch-type beta propeller"/>
    <property type="match status" value="1"/>
</dbReference>
<dbReference type="InterPro" id="IPR036047">
    <property type="entry name" value="F-box-like_dom_sf"/>
</dbReference>
<dbReference type="InterPro" id="IPR050354">
    <property type="entry name" value="F-box/kelch-repeat_ARATH"/>
</dbReference>
<dbReference type="InterPro" id="IPR001810">
    <property type="entry name" value="F-box_dom"/>
</dbReference>
<dbReference type="InterPro" id="IPR015915">
    <property type="entry name" value="Kelch-typ_b-propeller"/>
</dbReference>
<dbReference type="InterPro" id="IPR006652">
    <property type="entry name" value="Kelch_1"/>
</dbReference>
<dbReference type="PANTHER" id="PTHR24414:SF65">
    <property type="entry name" value="F-BOX DOMAIN-CONTAINING PROTEIN"/>
    <property type="match status" value="1"/>
</dbReference>
<dbReference type="PANTHER" id="PTHR24414">
    <property type="entry name" value="F-BOX/KELCH-REPEAT PROTEIN SKIP4"/>
    <property type="match status" value="1"/>
</dbReference>
<dbReference type="Pfam" id="PF00646">
    <property type="entry name" value="F-box"/>
    <property type="match status" value="1"/>
</dbReference>
<dbReference type="Pfam" id="PF25210">
    <property type="entry name" value="Kelch_FKB95"/>
    <property type="match status" value="1"/>
</dbReference>
<dbReference type="SMART" id="SM00256">
    <property type="entry name" value="FBOX"/>
    <property type="match status" value="1"/>
</dbReference>
<dbReference type="SMART" id="SM00612">
    <property type="entry name" value="Kelch"/>
    <property type="match status" value="2"/>
</dbReference>
<dbReference type="SUPFAM" id="SSF81383">
    <property type="entry name" value="F-box domain"/>
    <property type="match status" value="1"/>
</dbReference>
<dbReference type="SUPFAM" id="SSF117281">
    <property type="entry name" value="Kelch motif"/>
    <property type="match status" value="1"/>
</dbReference>
<dbReference type="PROSITE" id="PS50181">
    <property type="entry name" value="FBOX"/>
    <property type="match status" value="1"/>
</dbReference>
<organism>
    <name type="scientific">Arabidopsis thaliana</name>
    <name type="common">Mouse-ear cress</name>
    <dbReference type="NCBI Taxonomy" id="3702"/>
    <lineage>
        <taxon>Eukaryota</taxon>
        <taxon>Viridiplantae</taxon>
        <taxon>Streptophyta</taxon>
        <taxon>Embryophyta</taxon>
        <taxon>Tracheophyta</taxon>
        <taxon>Spermatophyta</taxon>
        <taxon>Magnoliopsida</taxon>
        <taxon>eudicotyledons</taxon>
        <taxon>Gunneridae</taxon>
        <taxon>Pentapetalae</taxon>
        <taxon>rosids</taxon>
        <taxon>malvids</taxon>
        <taxon>Brassicales</taxon>
        <taxon>Brassicaceae</taxon>
        <taxon>Camelineae</taxon>
        <taxon>Arabidopsis</taxon>
    </lineage>
</organism>